<feature type="signal peptide" evidence="2">
    <location>
        <begin position="1"/>
        <end position="26"/>
    </location>
</feature>
<feature type="chain" id="PRO_0000312666" description="Protein roller-3">
    <location>
        <begin position="27"/>
        <end position="2439"/>
    </location>
</feature>
<feature type="topological domain" description="Extracellular" evidence="2">
    <location>
        <begin position="27"/>
        <end position="1851"/>
    </location>
</feature>
<feature type="transmembrane region" description="Helical" evidence="2">
    <location>
        <begin position="1852"/>
        <end position="1872"/>
    </location>
</feature>
<feature type="topological domain" description="Cytoplasmic" evidence="2">
    <location>
        <begin position="1873"/>
        <end position="2439"/>
    </location>
</feature>
<feature type="domain" description="Fibronectin type-III 1" evidence="4">
    <location>
        <begin position="618"/>
        <end position="720"/>
    </location>
</feature>
<feature type="domain" description="Fibronectin type-III 2" evidence="4">
    <location>
        <begin position="1403"/>
        <end position="1503"/>
    </location>
</feature>
<feature type="domain" description="Fibronectin type-III 3" evidence="4">
    <location>
        <begin position="1507"/>
        <end position="1628"/>
    </location>
</feature>
<feature type="domain" description="Fibronectin type-III 4" evidence="4">
    <location>
        <begin position="1629"/>
        <end position="1732"/>
    </location>
</feature>
<feature type="domain" description="Fibronectin type-III 5" evidence="4">
    <location>
        <begin position="1738"/>
        <end position="1843"/>
    </location>
</feature>
<feature type="domain" description="Protein kinase" evidence="3">
    <location>
        <begin position="1928"/>
        <end position="2199"/>
    </location>
</feature>
<feature type="region of interest" description="Disordered" evidence="5">
    <location>
        <begin position="2214"/>
        <end position="2277"/>
    </location>
</feature>
<feature type="region of interest" description="Disordered" evidence="5">
    <location>
        <begin position="2315"/>
        <end position="2348"/>
    </location>
</feature>
<feature type="region of interest" description="Disordered" evidence="5">
    <location>
        <begin position="2412"/>
        <end position="2439"/>
    </location>
</feature>
<feature type="compositionally biased region" description="Polar residues" evidence="5">
    <location>
        <begin position="2216"/>
        <end position="2233"/>
    </location>
</feature>
<feature type="compositionally biased region" description="Polar residues" evidence="5">
    <location>
        <begin position="2334"/>
        <end position="2347"/>
    </location>
</feature>
<feature type="compositionally biased region" description="Polar residues" evidence="5">
    <location>
        <begin position="2420"/>
        <end position="2439"/>
    </location>
</feature>
<feature type="binding site" evidence="3">
    <location>
        <begin position="1934"/>
        <end position="1942"/>
    </location>
    <ligand>
        <name>ATP</name>
        <dbReference type="ChEBI" id="CHEBI:30616"/>
    </ligand>
</feature>
<feature type="binding site" evidence="3">
    <location>
        <position position="1963"/>
    </location>
    <ligand>
        <name>ATP</name>
        <dbReference type="ChEBI" id="CHEBI:30616"/>
    </ligand>
</feature>
<feature type="glycosylation site" description="N-linked (GlcNAc...) asparagine" evidence="2">
    <location>
        <position position="64"/>
    </location>
</feature>
<feature type="glycosylation site" description="N-linked (GlcNAc...) asparagine" evidence="2">
    <location>
        <position position="182"/>
    </location>
</feature>
<feature type="glycosylation site" description="N-linked (GlcNAc...) asparagine" evidence="2">
    <location>
        <position position="334"/>
    </location>
</feature>
<feature type="glycosylation site" description="N-linked (GlcNAc...) asparagine" evidence="2">
    <location>
        <position position="394"/>
    </location>
</feature>
<feature type="glycosylation site" description="N-linked (GlcNAc...) asparagine" evidence="2">
    <location>
        <position position="496"/>
    </location>
</feature>
<feature type="glycosylation site" description="N-linked (GlcNAc...) asparagine" evidence="2">
    <location>
        <position position="533"/>
    </location>
</feature>
<feature type="glycosylation site" description="N-linked (GlcNAc...) asparagine" evidence="2">
    <location>
        <position position="657"/>
    </location>
</feature>
<feature type="glycosylation site" description="N-linked (GlcNAc...) asparagine" evidence="2">
    <location>
        <position position="766"/>
    </location>
</feature>
<feature type="glycosylation site" description="N-linked (GlcNAc...) asparagine" evidence="2">
    <location>
        <position position="868"/>
    </location>
</feature>
<feature type="glycosylation site" description="N-linked (GlcNAc...) asparagine" evidence="2">
    <location>
        <position position="1003"/>
    </location>
</feature>
<feature type="glycosylation site" description="N-linked (GlcNAc...) asparagine" evidence="2">
    <location>
        <position position="1036"/>
    </location>
</feature>
<feature type="glycosylation site" description="N-linked (GlcNAc...) asparagine" evidence="2">
    <location>
        <position position="1090"/>
    </location>
</feature>
<feature type="glycosylation site" description="N-linked (GlcNAc...) asparagine" evidence="2">
    <location>
        <position position="1261"/>
    </location>
</feature>
<feature type="glycosylation site" description="N-linked (GlcNAc...) asparagine" evidence="2">
    <location>
        <position position="1567"/>
    </location>
</feature>
<feature type="glycosylation site" description="N-linked (GlcNAc...) asparagine" evidence="2">
    <location>
        <position position="1636"/>
    </location>
</feature>
<feature type="glycosylation site" description="N-linked (GlcNAc...) asparagine" evidence="2">
    <location>
        <position position="1677"/>
    </location>
</feature>
<feature type="glycosylation site" description="N-linked (GlcNAc...) asparagine" evidence="2">
    <location>
        <position position="1779"/>
    </location>
</feature>
<organism>
    <name type="scientific">Caenorhabditis briggsae</name>
    <dbReference type="NCBI Taxonomy" id="6238"/>
    <lineage>
        <taxon>Eukaryota</taxon>
        <taxon>Metazoa</taxon>
        <taxon>Ecdysozoa</taxon>
        <taxon>Nematoda</taxon>
        <taxon>Chromadorea</taxon>
        <taxon>Rhabditida</taxon>
        <taxon>Rhabditina</taxon>
        <taxon>Rhabditomorpha</taxon>
        <taxon>Rhabditoidea</taxon>
        <taxon>Rhabditidae</taxon>
        <taxon>Peloderinae</taxon>
        <taxon>Caenorhabditis</taxon>
    </lineage>
</organism>
<gene>
    <name evidence="1" type="primary">rol-3</name>
    <name type="ORF">CBG11320</name>
</gene>
<dbReference type="EMBL" id="HE600908">
    <property type="protein sequence ID" value="CAP30625.3"/>
    <property type="molecule type" value="Genomic_DNA"/>
</dbReference>
<dbReference type="SMR" id="Q61G93"/>
<dbReference type="FunCoup" id="Q61G93">
    <property type="interactions" value="8"/>
</dbReference>
<dbReference type="STRING" id="6238.Q61G93"/>
<dbReference type="GlyCosmos" id="Q61G93">
    <property type="glycosylation" value="17 sites, No reported glycans"/>
</dbReference>
<dbReference type="WormBase" id="CBG11320">
    <property type="protein sequence ID" value="CBP49886"/>
    <property type="gene ID" value="WBGene00032454"/>
    <property type="gene designation" value="Cbr-rol-3"/>
</dbReference>
<dbReference type="eggNOG" id="KOG1095">
    <property type="taxonomic scope" value="Eukaryota"/>
</dbReference>
<dbReference type="HOGENOM" id="CLU_000848_0_0_1"/>
<dbReference type="InParanoid" id="Q61G93"/>
<dbReference type="OMA" id="STDYKFW"/>
<dbReference type="Proteomes" id="UP000008549">
    <property type="component" value="Unassembled WGS sequence"/>
</dbReference>
<dbReference type="GO" id="GO:0005886">
    <property type="term" value="C:plasma membrane"/>
    <property type="evidence" value="ECO:0000318"/>
    <property type="project" value="GO_Central"/>
</dbReference>
<dbReference type="GO" id="GO:0005524">
    <property type="term" value="F:ATP binding"/>
    <property type="evidence" value="ECO:0007669"/>
    <property type="project" value="UniProtKB-KW"/>
</dbReference>
<dbReference type="GO" id="GO:0004672">
    <property type="term" value="F:protein kinase activity"/>
    <property type="evidence" value="ECO:0007669"/>
    <property type="project" value="InterPro"/>
</dbReference>
<dbReference type="GO" id="GO:0009792">
    <property type="term" value="P:embryo development ending in birth or egg hatching"/>
    <property type="evidence" value="ECO:0000250"/>
    <property type="project" value="UniProtKB"/>
</dbReference>
<dbReference type="GO" id="GO:0040011">
    <property type="term" value="P:locomotion"/>
    <property type="evidence" value="ECO:0000250"/>
    <property type="project" value="UniProtKB"/>
</dbReference>
<dbReference type="CDD" id="cd00063">
    <property type="entry name" value="FN3"/>
    <property type="match status" value="3"/>
</dbReference>
<dbReference type="CDD" id="cd00192">
    <property type="entry name" value="PTKc"/>
    <property type="match status" value="1"/>
</dbReference>
<dbReference type="FunFam" id="1.10.510.10:FF:001425">
    <property type="entry name" value="Predicted protein"/>
    <property type="match status" value="1"/>
</dbReference>
<dbReference type="FunFam" id="2.120.10.30:FF:000143">
    <property type="entry name" value="Protein roller-3"/>
    <property type="match status" value="1"/>
</dbReference>
<dbReference type="FunFam" id="2.60.40.10:FF:002168">
    <property type="entry name" value="Protein roller-3"/>
    <property type="match status" value="1"/>
</dbReference>
<dbReference type="FunFam" id="2.60.40.10:FF:002356">
    <property type="entry name" value="Protein roller-3"/>
    <property type="match status" value="1"/>
</dbReference>
<dbReference type="Gene3D" id="2.60.40.10">
    <property type="entry name" value="Immunoglobulins"/>
    <property type="match status" value="3"/>
</dbReference>
<dbReference type="Gene3D" id="3.30.200.20">
    <property type="entry name" value="Phosphorylase Kinase, domain 1"/>
    <property type="match status" value="1"/>
</dbReference>
<dbReference type="Gene3D" id="2.120.10.30">
    <property type="entry name" value="TolB, C-terminal domain"/>
    <property type="match status" value="1"/>
</dbReference>
<dbReference type="Gene3D" id="1.10.510.10">
    <property type="entry name" value="Transferase(Phosphotransferase) domain 1"/>
    <property type="match status" value="1"/>
</dbReference>
<dbReference type="InterPro" id="IPR011042">
    <property type="entry name" value="6-blade_b-propeller_TolB-like"/>
</dbReference>
<dbReference type="InterPro" id="IPR003961">
    <property type="entry name" value="FN3_dom"/>
</dbReference>
<dbReference type="InterPro" id="IPR036116">
    <property type="entry name" value="FN3_sf"/>
</dbReference>
<dbReference type="InterPro" id="IPR013783">
    <property type="entry name" value="Ig-like_fold"/>
</dbReference>
<dbReference type="InterPro" id="IPR011009">
    <property type="entry name" value="Kinase-like_dom_sf"/>
</dbReference>
<dbReference type="InterPro" id="IPR000719">
    <property type="entry name" value="Prot_kinase_dom"/>
</dbReference>
<dbReference type="InterPro" id="IPR050122">
    <property type="entry name" value="RTK"/>
</dbReference>
<dbReference type="InterPro" id="IPR001245">
    <property type="entry name" value="Ser-Thr/Tyr_kinase_cat_dom"/>
</dbReference>
<dbReference type="PANTHER" id="PTHR24416">
    <property type="entry name" value="TYROSINE-PROTEIN KINASE RECEPTOR"/>
    <property type="match status" value="1"/>
</dbReference>
<dbReference type="PANTHER" id="PTHR24416:SF611">
    <property type="entry name" value="TYROSINE-PROTEIN KINASE TRANSMEMBRANE RECEPTOR ROR"/>
    <property type="match status" value="1"/>
</dbReference>
<dbReference type="Pfam" id="PF25494">
    <property type="entry name" value="Beta-prop_Rol-3"/>
    <property type="match status" value="1"/>
</dbReference>
<dbReference type="Pfam" id="PF00041">
    <property type="entry name" value="fn3"/>
    <property type="match status" value="1"/>
</dbReference>
<dbReference type="Pfam" id="PF07714">
    <property type="entry name" value="PK_Tyr_Ser-Thr"/>
    <property type="match status" value="1"/>
</dbReference>
<dbReference type="PRINTS" id="PR00109">
    <property type="entry name" value="TYRKINASE"/>
</dbReference>
<dbReference type="SMART" id="SM00060">
    <property type="entry name" value="FN3"/>
    <property type="match status" value="4"/>
</dbReference>
<dbReference type="SUPFAM" id="SSF49265">
    <property type="entry name" value="Fibronectin type III"/>
    <property type="match status" value="3"/>
</dbReference>
<dbReference type="SUPFAM" id="SSF56112">
    <property type="entry name" value="Protein kinase-like (PK-like)"/>
    <property type="match status" value="1"/>
</dbReference>
<dbReference type="SUPFAM" id="SSF63825">
    <property type="entry name" value="YWTD domain"/>
    <property type="match status" value="1"/>
</dbReference>
<dbReference type="PROSITE" id="PS50853">
    <property type="entry name" value="FN3"/>
    <property type="match status" value="5"/>
</dbReference>
<dbReference type="PROSITE" id="PS50011">
    <property type="entry name" value="PROTEIN_KINASE_DOM"/>
    <property type="match status" value="1"/>
</dbReference>
<evidence type="ECO:0000250" key="1">
    <source>
        <dbReference type="UniProtKB" id="Q8I7I5"/>
    </source>
</evidence>
<evidence type="ECO:0000255" key="2"/>
<evidence type="ECO:0000255" key="3">
    <source>
        <dbReference type="PROSITE-ProRule" id="PRU00159"/>
    </source>
</evidence>
<evidence type="ECO:0000255" key="4">
    <source>
        <dbReference type="PROSITE-ProRule" id="PRU00316"/>
    </source>
</evidence>
<evidence type="ECO:0000256" key="5">
    <source>
        <dbReference type="SAM" id="MobiDB-lite"/>
    </source>
</evidence>
<evidence type="ECO:0000305" key="6"/>
<reference key="1">
    <citation type="journal article" date="2003" name="PLoS Biol.">
        <title>The genome sequence of Caenorhabditis briggsae: a platform for comparative genomics.</title>
        <authorList>
            <person name="Stein L.D."/>
            <person name="Bao Z."/>
            <person name="Blasiar D."/>
            <person name="Blumenthal T."/>
            <person name="Brent M.R."/>
            <person name="Chen N."/>
            <person name="Chinwalla A."/>
            <person name="Clarke L."/>
            <person name="Clee C."/>
            <person name="Coghlan A."/>
            <person name="Coulson A."/>
            <person name="D'Eustachio P."/>
            <person name="Fitch D.H.A."/>
            <person name="Fulton L.A."/>
            <person name="Fulton R.E."/>
            <person name="Griffiths-Jones S."/>
            <person name="Harris T.W."/>
            <person name="Hillier L.W."/>
            <person name="Kamath R."/>
            <person name="Kuwabara P.E."/>
            <person name="Mardis E.R."/>
            <person name="Marra M.A."/>
            <person name="Miner T.L."/>
            <person name="Minx P."/>
            <person name="Mullikin J.C."/>
            <person name="Plumb R.W."/>
            <person name="Rogers J."/>
            <person name="Schein J.E."/>
            <person name="Sohrmann M."/>
            <person name="Spieth J."/>
            <person name="Stajich J.E."/>
            <person name="Wei C."/>
            <person name="Willey D."/>
            <person name="Wilson R.K."/>
            <person name="Durbin R.M."/>
            <person name="Waterston R.H."/>
        </authorList>
    </citation>
    <scope>NUCLEOTIDE SEQUENCE [LARGE SCALE GENOMIC DNA]</scope>
    <source>
        <strain>AF16</strain>
    </source>
</reference>
<accession>Q61G93</accession>
<accession>A8XDA6</accession>
<proteinExistence type="inferred from homology"/>
<keyword id="KW-0067">ATP-binding</keyword>
<keyword id="KW-0325">Glycoprotein</keyword>
<keyword id="KW-0472">Membrane</keyword>
<keyword id="KW-0547">Nucleotide-binding</keyword>
<keyword id="KW-1185">Reference proteome</keyword>
<keyword id="KW-0677">Repeat</keyword>
<keyword id="KW-0732">Signal</keyword>
<keyword id="KW-0812">Transmembrane</keyword>
<keyword id="KW-1133">Transmembrane helix</keyword>
<name>ROL3_CAEBR</name>
<protein>
    <recommendedName>
        <fullName>Protein roller-3</fullName>
    </recommendedName>
</protein>
<sequence length="2439" mass="271800">MLDFPRFSLFLFLLFSSFLFSSFVHAATVFSSSLKTCQSQCEERNLAYPLDSGEVHWTGLAEFNYTTRISSCKHGCEDVDERESKCNVKCAEEGIVTNSCKQGCRAVLVSFLAQAQALLIQTRVNMEVLETAMKLKWEFPETLAEELKEIANADIFWFSQTRPLNGILGWRWTSLPQSSFRNSSLVSEVHVPFEHGEHVEVRLALSYRNQVLVSRTTTYHLPLSKAGTTLEVIGQLQLSDDRVAVCYRTNQPTPKFKLTVMTMDDNTINTEESISRCHLFSNLPRDNCCKASISAIDEHGATTAFVEIKLDFFVNQVEIELVSAASSSRIIFSNGTHLLENEELAQYALGDSATVIPFPLPTDDTITAIAGITDTIIAIGSSKGSLWTFQMSANQTDEDQPSSVIQLKTVGEMDTKITQIEIDHIQRTLYAVQHDKGILRCKLRTMESEESPTCVLIVNNDALNPPKEITLDPVNGHIYSLNVDNKVYRTEMIAFNATGIETVASLQYLKDMSPSNGIFFDVSKFLLYSALQNGSMMTLNPVTDQAHIFKDSGYTDVQNFRIKSDLIYWMKKKCGKTDADENCIFTENLQRSEEDIPNKFTYSSALMSYSFLEEILLKPRIVAVSSIALLTSDKTGRVSWDEANTLPFQAQGSSWRNFTYFLKITAPDITDFEAVEMYTSSTDVKIDVTPGNQYNAQVQVCSDDFCSTPSSTSNTALPDLGGGVPFVFTKKKADDIISIDMLGNLVITDDSVKAVERMQNPHVLDNTTKTVYLAGDHSMGIFKKDLDDATGSPKPFKDGLFVEMMSIMPSRSMILIASSYKITSYRLPTTFDFEYYSCEEPLEDCAEVMGISSDDSTGMVYFLTQSRNGTVILWESDPENRAPRDIATAPSIVPFRRFLIIHDKMILVTKNNHIVQTDKSLKVVNVATELERVDRILPLRYAAISHKIEFTDEIKFMEGSKTDLQWTLSPPLEAGTVIFKVSFFREKMGGQDAPITTIQSDTNFTIPPEVLKEWSSAQRFDVSIQAITPWATAVLNRTGLTAPVKPPTPPTQLKIFATQQKTVDGPRALISFFWGPPLEWNGTPYQYIVNCTKDDGKVITIDSSELKPLVKLFAIDSTNSLIIINDLAHEEPRRETRQVTQPVKLDYQAMAFIGEDLYTVRKEGESAQPFLVQIDTNHIDNTVHKVSIGGDVTRIDAMTSDWVGNRLIFVAGTNLYQLSLEPFLSTSLLNPHKLITLSAATDAKQLAYDPFMNTAYLLTKNGSLFALDMNKNTEANLALTVPCLASQTVTWMMTEFAWNRASSPKIYALTWNGLINVDLAEDFQCNEVRIDWSKFGEKGLKAISSFAIADKLFAFVTSSEMLIYGRDTVTPITIANPPLKQILAVSQSSQPYPERSCFELPSSKGIVFSIVNEGKTGALLEVTKSSSSSACLDVSMPQTQYEIYFTRKNTDKVKHVRSFSDRIHVENGILDKETDYDVTVTWLNRYSPASGVSSSRSFRTGFGYPSAPRDPHAIPVTPDTVYLYWSLPETLNAPISEIKYKISQQAAGISVPTSIAVIPLSETVSSNISSDTTACLINPCRVKIANLRPSNEYKFWVTATHISHLDAATILKDDDAVSSEAVARTLDVPGTLRPDNVTGSSLLLRWNGLEPEHRPTSIAIQYRESGGANNEWQSPTNASFEPDVATELVPVTNLLSATTYDYRFVATYTGTYTIDGKVLAFKEDYLQLIQQARTKAGVPTAPQSVEAKIDTEGWIVTWKEPMSDGGSPITSYAVETRINKTAEWEIAERGLDGWKTWWRPGKSETSSSMSYSSEVSEFRIRAANIEGFGAYAYTEEKKEEKEEEKGGILPYFLGISIILLLAAMILVGCFWLKSRRRQQMKKREAEDERNCIRLDVVANMNFTNSRQTLSPEYESEIRNLPIVDYNDVEIVRHISDCSYGSVHEGIAEEVPLSWEKQVKVAVKQLRPKSANHDFDRMMFMKEAILLNNLDHNIVKELGVCVSPGQGLILLEYMEGGNLLNFLRESAPSEMQASELSTRDLLAISVDIARGMNYLERLPHVHKNLSARKCLLSGRPGVAKLEMGMPRALSKGEINRVDLESMQSVKWMAPEVFKDLMFTSKSDVWAYGVLLYEIFSFGEEPYGSMDSRRVITDVRDGNLTLPVPPYCPSKKICKVMKMCLISDPNKRASFATILKIFETCRDDQQSQDDKRIHFNEGSDNINFNASQDSTSSREPPSPSHRIREFTQISGDLEPPSPSPLNQSFGGFEHPYEGDRPATMWNASGARNSAKNSIGRSMKKDKFRNPIHSMDDLVARSQRPLSIHSEDTESTDFGGATSSMHSPSSSNRTNHYELPMSRLSAAPPIGIVNNAFESSNNSLNMSRSWTGLAGEVNPNPAGASSSGTLPHHANSMVHLRAPTGQPPTRVNRNSSGGTCRSVSQV</sequence>
<comment type="function">
    <text evidence="1">Involved in larval development and locomotion.</text>
</comment>
<comment type="subcellular location">
    <subcellularLocation>
        <location evidence="2 6">Membrane</location>
        <topology evidence="2 6">Single-pass type I membrane protein</topology>
    </subcellularLocation>
</comment>
<comment type="domain">
    <text evidence="2">The protein kinase domain is predicted to be catalytically inactive.</text>
</comment>